<proteinExistence type="inferred from homology"/>
<gene>
    <name evidence="2" type="primary">ccsA</name>
    <name type="ordered locus">MAE_01900</name>
</gene>
<sequence>MNLVSLENFLDNTSFLVLFLTMLVYWAGAAFPSIPLLPGLGSTGVAIANLCIAALLGARWLEAGYFPISNLYESLFFLAWGVTAVHLIAEYTSRSRLVGVVTTPVAMGITAFATLSLPGEMQTSAPLVPALKSNWLMMHVSVMMLSYAALMVGSLMAIAFLIVTRGQNIELKGSSVGTGAYRLQNKLSTTLSAPIFMETANGGTTALLTPTLTAMATLSPQRLSLAETLDNISYRVIGLGFPLLTIGIIAGAVWANEAWGSYWSWDPKETWALITWLVFAAYLHARITRGWQGRKPAILAASGFVVVWVCYLGVNLLGKGLHSYGWFF</sequence>
<evidence type="ECO:0000250" key="1"/>
<evidence type="ECO:0000255" key="2">
    <source>
        <dbReference type="HAMAP-Rule" id="MF_01391"/>
    </source>
</evidence>
<keyword id="KW-0201">Cytochrome c-type biogenesis</keyword>
<keyword id="KW-0472">Membrane</keyword>
<keyword id="KW-0793">Thylakoid</keyword>
<keyword id="KW-0812">Transmembrane</keyword>
<keyword id="KW-1133">Transmembrane helix</keyword>
<organism>
    <name type="scientific">Microcystis aeruginosa (strain NIES-843 / IAM M-2473)</name>
    <dbReference type="NCBI Taxonomy" id="449447"/>
    <lineage>
        <taxon>Bacteria</taxon>
        <taxon>Bacillati</taxon>
        <taxon>Cyanobacteriota</taxon>
        <taxon>Cyanophyceae</taxon>
        <taxon>Oscillatoriophycideae</taxon>
        <taxon>Chroococcales</taxon>
        <taxon>Microcystaceae</taxon>
        <taxon>Microcystis</taxon>
    </lineage>
</organism>
<comment type="function">
    <text evidence="2">Required during biogenesis of c-type cytochromes (cytochrome c6 and cytochrome f) at the step of heme attachment.</text>
</comment>
<comment type="subunit">
    <text evidence="1">May interact with ccs1.</text>
</comment>
<comment type="subcellular location">
    <subcellularLocation>
        <location evidence="2">Cellular thylakoid membrane</location>
        <topology evidence="2">Multi-pass membrane protein</topology>
    </subcellularLocation>
</comment>
<comment type="similarity">
    <text evidence="2">Belongs to the CcmF/CycK/Ccl1/NrfE/CcsA family.</text>
</comment>
<dbReference type="EMBL" id="AP009552">
    <property type="protein sequence ID" value="BAG00012.1"/>
    <property type="molecule type" value="Genomic_DNA"/>
</dbReference>
<dbReference type="SMR" id="B0JLZ5"/>
<dbReference type="STRING" id="449447.MAE_01900"/>
<dbReference type="PaxDb" id="449447-MAE_01900"/>
<dbReference type="EnsemblBacteria" id="BAG00012">
    <property type="protein sequence ID" value="BAG00012"/>
    <property type="gene ID" value="MAE_01900"/>
</dbReference>
<dbReference type="KEGG" id="mar:MAE_01900"/>
<dbReference type="eggNOG" id="COG0755">
    <property type="taxonomic scope" value="Bacteria"/>
</dbReference>
<dbReference type="HOGENOM" id="CLU_049710_2_4_3"/>
<dbReference type="BioCyc" id="MAER449447:MAE_RS00865-MONOMER"/>
<dbReference type="Proteomes" id="UP000001510">
    <property type="component" value="Chromosome"/>
</dbReference>
<dbReference type="GO" id="GO:0031676">
    <property type="term" value="C:plasma membrane-derived thylakoid membrane"/>
    <property type="evidence" value="ECO:0007669"/>
    <property type="project" value="UniProtKB-SubCell"/>
</dbReference>
<dbReference type="GO" id="GO:0020037">
    <property type="term" value="F:heme binding"/>
    <property type="evidence" value="ECO:0007669"/>
    <property type="project" value="InterPro"/>
</dbReference>
<dbReference type="GO" id="GO:0017004">
    <property type="term" value="P:cytochrome complex assembly"/>
    <property type="evidence" value="ECO:0007669"/>
    <property type="project" value="UniProtKB-UniRule"/>
</dbReference>
<dbReference type="HAMAP" id="MF_01391">
    <property type="entry name" value="CytC_CcsA"/>
    <property type="match status" value="1"/>
</dbReference>
<dbReference type="InterPro" id="IPR002541">
    <property type="entry name" value="Cyt_c_assembly"/>
</dbReference>
<dbReference type="InterPro" id="IPR017562">
    <property type="entry name" value="Cyt_c_biogenesis_CcsA"/>
</dbReference>
<dbReference type="InterPro" id="IPR045062">
    <property type="entry name" value="Cyt_c_biogenesis_CcsA/CcmC"/>
</dbReference>
<dbReference type="NCBIfam" id="TIGR03144">
    <property type="entry name" value="cytochr_II_ccsB"/>
    <property type="match status" value="1"/>
</dbReference>
<dbReference type="PANTHER" id="PTHR30071:SF1">
    <property type="entry name" value="CYTOCHROME B_B6 PROTEIN-RELATED"/>
    <property type="match status" value="1"/>
</dbReference>
<dbReference type="PANTHER" id="PTHR30071">
    <property type="entry name" value="HEME EXPORTER PROTEIN C"/>
    <property type="match status" value="1"/>
</dbReference>
<dbReference type="Pfam" id="PF01578">
    <property type="entry name" value="Cytochrom_C_asm"/>
    <property type="match status" value="1"/>
</dbReference>
<feature type="chain" id="PRO_0000353701" description="Cytochrome c biogenesis protein CcsA">
    <location>
        <begin position="1"/>
        <end position="328"/>
    </location>
</feature>
<feature type="transmembrane region" description="Helical" evidence="2">
    <location>
        <begin position="15"/>
        <end position="35"/>
    </location>
</feature>
<feature type="transmembrane region" description="Helical" evidence="2">
    <location>
        <begin position="36"/>
        <end position="56"/>
    </location>
</feature>
<feature type="transmembrane region" description="Helical" evidence="2">
    <location>
        <begin position="68"/>
        <end position="88"/>
    </location>
</feature>
<feature type="transmembrane region" description="Helical" evidence="2">
    <location>
        <begin position="97"/>
        <end position="117"/>
    </location>
</feature>
<feature type="transmembrane region" description="Helical" evidence="2">
    <location>
        <begin position="142"/>
        <end position="162"/>
    </location>
</feature>
<feature type="transmembrane region" description="Helical" evidence="2">
    <location>
        <begin position="236"/>
        <end position="256"/>
    </location>
</feature>
<feature type="transmembrane region" description="Helical" evidence="2">
    <location>
        <begin position="263"/>
        <end position="283"/>
    </location>
</feature>
<feature type="transmembrane region" description="Helical" evidence="2">
    <location>
        <begin position="297"/>
        <end position="317"/>
    </location>
</feature>
<name>CCSA_MICAN</name>
<accession>B0JLZ5</accession>
<protein>
    <recommendedName>
        <fullName evidence="2">Cytochrome c biogenesis protein CcsA</fullName>
    </recommendedName>
</protein>
<reference key="1">
    <citation type="journal article" date="2007" name="DNA Res.">
        <title>Complete genomic structure of the bloom-forming toxic cyanobacterium Microcystis aeruginosa NIES-843.</title>
        <authorList>
            <person name="Kaneko T."/>
            <person name="Nakajima N."/>
            <person name="Okamoto S."/>
            <person name="Suzuki I."/>
            <person name="Tanabe Y."/>
            <person name="Tamaoki M."/>
            <person name="Nakamura Y."/>
            <person name="Kasai F."/>
            <person name="Watanabe A."/>
            <person name="Kawashima K."/>
            <person name="Kishida Y."/>
            <person name="Ono A."/>
            <person name="Shimizu Y."/>
            <person name="Takahashi C."/>
            <person name="Minami C."/>
            <person name="Fujishiro T."/>
            <person name="Kohara M."/>
            <person name="Katoh M."/>
            <person name="Nakazaki N."/>
            <person name="Nakayama S."/>
            <person name="Yamada M."/>
            <person name="Tabata S."/>
            <person name="Watanabe M.M."/>
        </authorList>
    </citation>
    <scope>NUCLEOTIDE SEQUENCE [LARGE SCALE GENOMIC DNA]</scope>
    <source>
        <strain>NIES-843 / IAM M-247</strain>
    </source>
</reference>